<proteinExistence type="inferred from homology"/>
<keyword id="KW-0162">Chylomicron</keyword>
<keyword id="KW-0325">Glycoprotein</keyword>
<keyword id="KW-0442">Lipid degradation</keyword>
<keyword id="KW-0443">Lipid metabolism</keyword>
<keyword id="KW-0445">Lipid transport</keyword>
<keyword id="KW-1185">Reference proteome</keyword>
<keyword id="KW-0964">Secreted</keyword>
<keyword id="KW-0730">Sialic acid</keyword>
<keyword id="KW-0732">Signal</keyword>
<keyword id="KW-0813">Transport</keyword>
<keyword id="KW-0850">VLDL</keyword>
<comment type="function">
    <text evidence="2">Component of triglyceride-rich very low density lipoproteins (VLDL) and high density lipoproteins (HDL) in plasma. Plays a multifaceted role in triglyceride homeostasis. Intracellularly, promotes hepatic very low density lipoprotein 1 (VLDL1) assembly and secretion; extracellularly, attenuates hydrolysis and clearance of triglyceride-rich lipoproteins (TRLs). Impairs the lipolysis of TRLs by inhibiting lipoprotein lipase and the hepatic uptake of TRLs by remnant receptors. Formed of several curved helices connected via semiflexible hinges, so that it can wrap tightly around the curved micelle surface and easily adapt to the different diameters of its natural binding partners.</text>
</comment>
<comment type="subcellular location">
    <subcellularLocation>
        <location evidence="2">Secreted</location>
    </subcellularLocation>
</comment>
<comment type="PTM">
    <text evidence="2">The most abundant glycoforms are characterized by an O-linked disaccharide galactose linked to N-acetylgalactosamine (Gal-GalNAc), further modified with up to 3 sialic acid residues. Less abundant glycoforms are characterized by more complex and fucosylated glycan moieties. O-glycosylated on Thr-94 with a core 1 or possibly core 8 glycan.</text>
</comment>
<comment type="similarity">
    <text evidence="4">Belongs to the apolipoprotein C3 family.</text>
</comment>
<name>APOC3_NEOSC</name>
<protein>
    <recommendedName>
        <fullName>Apolipoprotein C-III</fullName>
        <shortName>Apo-CIII</shortName>
        <shortName>ApoC-III</shortName>
    </recommendedName>
    <alternativeName>
        <fullName>Apolipoprotein C3</fullName>
    </alternativeName>
</protein>
<reference key="1">
    <citation type="submission" date="2017-05" db="EMBL/GenBank/DDBJ databases">
        <title>Improved de novo genome assembly: linked-read sequencing combined with optical mapping produce a high quality mammalian genome at relatively low cost.</title>
        <authorList>
            <person name="Mohr D.W."/>
            <person name="Scott A.F."/>
        </authorList>
    </citation>
    <scope>NUCLEOTIDE SEQUENCE [LARGE SCALE GENOMIC DNA]</scope>
    <source>
        <tissue>Blood</tissue>
    </source>
</reference>
<reference key="2">
    <citation type="unpublished observations" date="2019-10">
        <authorList>
            <person name="Puppione D.L."/>
        </authorList>
    </citation>
    <scope>IDENTIFICATION</scope>
</reference>
<sequence>MQPRVLLIAALLVLLASARALEAEDPSLLGLMQGYMQHATKTAQDTLTSVQESQVAQRARDWMNDGFSSLKDYWSTFKGKLSGFWDSASEVQTTAASDAS</sequence>
<evidence type="ECO:0000250" key="1"/>
<evidence type="ECO:0000250" key="2">
    <source>
        <dbReference type="UniProtKB" id="P02656"/>
    </source>
</evidence>
<evidence type="ECO:0000255" key="3"/>
<evidence type="ECO:0000305" key="4"/>
<feature type="signal peptide" evidence="3">
    <location>
        <begin position="1"/>
        <end position="20"/>
    </location>
</feature>
<feature type="chain" id="PRO_5016013032" description="Apolipoprotein C-III">
    <location>
        <begin position="21"/>
        <end position="100"/>
    </location>
</feature>
<feature type="region of interest" description="Lipid-binding" evidence="1">
    <location>
        <begin position="68"/>
        <end position="100"/>
    </location>
</feature>
<feature type="site" description="May interact with the LDL receptor" evidence="2">
    <location>
        <position position="41"/>
    </location>
</feature>
<feature type="glycosylation site" description="O-linked (GalNAc...) threonine" evidence="2">
    <location>
        <position position="94"/>
    </location>
</feature>
<organism>
    <name type="scientific">Neomonachus schauinslandi</name>
    <name type="common">Hawaiian monk seal</name>
    <name type="synonym">Monachus schauinslandi</name>
    <dbReference type="NCBI Taxonomy" id="29088"/>
    <lineage>
        <taxon>Eukaryota</taxon>
        <taxon>Metazoa</taxon>
        <taxon>Chordata</taxon>
        <taxon>Craniata</taxon>
        <taxon>Vertebrata</taxon>
        <taxon>Euteleostomi</taxon>
        <taxon>Mammalia</taxon>
        <taxon>Eutheria</taxon>
        <taxon>Laurasiatheria</taxon>
        <taxon>Carnivora</taxon>
        <taxon>Caniformia</taxon>
        <taxon>Pinnipedia</taxon>
        <taxon>Phocidae</taxon>
        <taxon>Monachinae</taxon>
        <taxon>Monachini</taxon>
        <taxon>Neomonachus</taxon>
    </lineage>
</organism>
<dbReference type="EMBL" id="NINY01000000">
    <property type="status" value="NOT_ANNOTATED_CDS"/>
    <property type="molecule type" value="Genomic_DNA"/>
</dbReference>
<dbReference type="RefSeq" id="XP_021552065.1">
    <property type="nucleotide sequence ID" value="XM_021696390.1"/>
</dbReference>
<dbReference type="SMR" id="A0A2Y9HRM2"/>
<dbReference type="FunCoup" id="A0A2Y9HRM2">
    <property type="interactions" value="1"/>
</dbReference>
<dbReference type="GlyCosmos" id="A0A2Y9HRM2">
    <property type="glycosylation" value="1 site, No reported glycans"/>
</dbReference>
<dbReference type="GeneID" id="110586205"/>
<dbReference type="InParanoid" id="A0A2Y9HRM2"/>
<dbReference type="Proteomes" id="UP000248481">
    <property type="component" value="Chromosome 11"/>
</dbReference>
<dbReference type="GO" id="GO:0042627">
    <property type="term" value="C:chylomicron"/>
    <property type="evidence" value="ECO:0007669"/>
    <property type="project" value="UniProtKB-KW"/>
</dbReference>
<dbReference type="GO" id="GO:0034363">
    <property type="term" value="C:intermediate-density lipoprotein particle"/>
    <property type="evidence" value="ECO:0007669"/>
    <property type="project" value="TreeGrafter"/>
</dbReference>
<dbReference type="GO" id="GO:0034366">
    <property type="term" value="C:spherical high-density lipoprotein particle"/>
    <property type="evidence" value="ECO:0007669"/>
    <property type="project" value="TreeGrafter"/>
</dbReference>
<dbReference type="GO" id="GO:0034361">
    <property type="term" value="C:very-low-density lipoprotein particle"/>
    <property type="evidence" value="ECO:0007669"/>
    <property type="project" value="UniProtKB-KW"/>
</dbReference>
<dbReference type="GO" id="GO:0070653">
    <property type="term" value="F:high-density lipoprotein particle receptor binding"/>
    <property type="evidence" value="ECO:0007669"/>
    <property type="project" value="TreeGrafter"/>
</dbReference>
<dbReference type="GO" id="GO:0055102">
    <property type="term" value="F:lipase inhibitor activity"/>
    <property type="evidence" value="ECO:0007669"/>
    <property type="project" value="TreeGrafter"/>
</dbReference>
<dbReference type="GO" id="GO:0005543">
    <property type="term" value="F:phospholipid binding"/>
    <property type="evidence" value="ECO:0007669"/>
    <property type="project" value="TreeGrafter"/>
</dbReference>
<dbReference type="GO" id="GO:0042632">
    <property type="term" value="P:cholesterol homeostasis"/>
    <property type="evidence" value="ECO:0007669"/>
    <property type="project" value="TreeGrafter"/>
</dbReference>
<dbReference type="GO" id="GO:0016042">
    <property type="term" value="P:lipid catabolic process"/>
    <property type="evidence" value="ECO:0007669"/>
    <property type="project" value="UniProtKB-KW"/>
</dbReference>
<dbReference type="GO" id="GO:0006869">
    <property type="term" value="P:lipid transport"/>
    <property type="evidence" value="ECO:0007669"/>
    <property type="project" value="UniProtKB-KW"/>
</dbReference>
<dbReference type="GO" id="GO:0042157">
    <property type="term" value="P:lipoprotein metabolic process"/>
    <property type="evidence" value="ECO:0007669"/>
    <property type="project" value="InterPro"/>
</dbReference>
<dbReference type="GO" id="GO:0010987">
    <property type="term" value="P:negative regulation of high-density lipoprotein particle clearance"/>
    <property type="evidence" value="ECO:0007669"/>
    <property type="project" value="TreeGrafter"/>
</dbReference>
<dbReference type="GO" id="GO:0010989">
    <property type="term" value="P:negative regulation of low-density lipoprotein particle clearance"/>
    <property type="evidence" value="ECO:0007669"/>
    <property type="project" value="TreeGrafter"/>
</dbReference>
<dbReference type="GO" id="GO:0010897">
    <property type="term" value="P:negative regulation of triglyceride catabolic process"/>
    <property type="evidence" value="ECO:0007669"/>
    <property type="project" value="TreeGrafter"/>
</dbReference>
<dbReference type="GO" id="GO:0010916">
    <property type="term" value="P:negative regulation of very-low-density lipoprotein particle clearance"/>
    <property type="evidence" value="ECO:0007669"/>
    <property type="project" value="TreeGrafter"/>
</dbReference>
<dbReference type="GO" id="GO:0070328">
    <property type="term" value="P:triglyceride homeostasis"/>
    <property type="evidence" value="ECO:0007669"/>
    <property type="project" value="TreeGrafter"/>
</dbReference>
<dbReference type="Gene3D" id="6.10.90.10">
    <property type="entry name" value="Apolipoprotein CIII"/>
    <property type="match status" value="1"/>
</dbReference>
<dbReference type="InterPro" id="IPR008403">
    <property type="entry name" value="Apo-CIII"/>
</dbReference>
<dbReference type="InterPro" id="IPR038195">
    <property type="entry name" value="Apo_CIII_sf"/>
</dbReference>
<dbReference type="PANTHER" id="PTHR14225">
    <property type="entry name" value="APOLIPOPROTEIN C-III"/>
    <property type="match status" value="1"/>
</dbReference>
<dbReference type="PANTHER" id="PTHR14225:SF0">
    <property type="entry name" value="APOLIPOPROTEIN C-III"/>
    <property type="match status" value="1"/>
</dbReference>
<dbReference type="Pfam" id="PF05778">
    <property type="entry name" value="Apo-CIII"/>
    <property type="match status" value="1"/>
</dbReference>
<accession>A0A2Y9HRM2</accession>
<gene>
    <name type="primary">APOC3</name>
</gene>